<comment type="function">
    <text evidence="1">O-methyltransferase that catalyzes the 2 O-methylation steps in the ubiquinone biosynthetic pathway.</text>
</comment>
<comment type="catalytic activity">
    <reaction evidence="1">
        <text>a 3-demethylubiquinol + S-adenosyl-L-methionine = a ubiquinol + S-adenosyl-L-homocysteine + H(+)</text>
        <dbReference type="Rhea" id="RHEA:44380"/>
        <dbReference type="Rhea" id="RHEA-COMP:9566"/>
        <dbReference type="Rhea" id="RHEA-COMP:10914"/>
        <dbReference type="ChEBI" id="CHEBI:15378"/>
        <dbReference type="ChEBI" id="CHEBI:17976"/>
        <dbReference type="ChEBI" id="CHEBI:57856"/>
        <dbReference type="ChEBI" id="CHEBI:59789"/>
        <dbReference type="ChEBI" id="CHEBI:84422"/>
        <dbReference type="EC" id="2.1.1.64"/>
    </reaction>
</comment>
<comment type="catalytic activity">
    <reaction evidence="1">
        <text>a 3-(all-trans-polyprenyl)benzene-1,2-diol + S-adenosyl-L-methionine = a 2-methoxy-6-(all-trans-polyprenyl)phenol + S-adenosyl-L-homocysteine + H(+)</text>
        <dbReference type="Rhea" id="RHEA:31411"/>
        <dbReference type="Rhea" id="RHEA-COMP:9550"/>
        <dbReference type="Rhea" id="RHEA-COMP:9551"/>
        <dbReference type="ChEBI" id="CHEBI:15378"/>
        <dbReference type="ChEBI" id="CHEBI:57856"/>
        <dbReference type="ChEBI" id="CHEBI:59789"/>
        <dbReference type="ChEBI" id="CHEBI:62729"/>
        <dbReference type="ChEBI" id="CHEBI:62731"/>
        <dbReference type="EC" id="2.1.1.222"/>
    </reaction>
</comment>
<comment type="pathway">
    <text evidence="1">Cofactor biosynthesis; ubiquinone biosynthesis.</text>
</comment>
<comment type="similarity">
    <text evidence="1">Belongs to the methyltransferase superfamily. UbiG/COQ3 family.</text>
</comment>
<gene>
    <name evidence="1" type="primary">ubiG</name>
    <name type="ordered locus">RHECIAT_CH0004027</name>
</gene>
<dbReference type="EC" id="2.1.1.222" evidence="1"/>
<dbReference type="EC" id="2.1.1.64" evidence="1"/>
<dbReference type="EMBL" id="CP001074">
    <property type="protein sequence ID" value="ACE92958.1"/>
    <property type="molecule type" value="Genomic_DNA"/>
</dbReference>
<dbReference type="SMR" id="B3PP83"/>
<dbReference type="KEGG" id="rec:RHECIAT_CH0004027"/>
<dbReference type="eggNOG" id="COG2227">
    <property type="taxonomic scope" value="Bacteria"/>
</dbReference>
<dbReference type="HOGENOM" id="CLU_042432_0_0_5"/>
<dbReference type="UniPathway" id="UPA00232"/>
<dbReference type="Proteomes" id="UP000008817">
    <property type="component" value="Chromosome"/>
</dbReference>
<dbReference type="GO" id="GO:0102208">
    <property type="term" value="F:2-polyprenyl-6-hydroxyphenol methylase activity"/>
    <property type="evidence" value="ECO:0007669"/>
    <property type="project" value="UniProtKB-EC"/>
</dbReference>
<dbReference type="GO" id="GO:0061542">
    <property type="term" value="F:3-demethylubiquinol 3-O-methyltransferase activity"/>
    <property type="evidence" value="ECO:0007669"/>
    <property type="project" value="UniProtKB-UniRule"/>
</dbReference>
<dbReference type="GO" id="GO:0010420">
    <property type="term" value="F:polyprenyldihydroxybenzoate methyltransferase activity"/>
    <property type="evidence" value="ECO:0007669"/>
    <property type="project" value="InterPro"/>
</dbReference>
<dbReference type="GO" id="GO:0032259">
    <property type="term" value="P:methylation"/>
    <property type="evidence" value="ECO:0007669"/>
    <property type="project" value="UniProtKB-KW"/>
</dbReference>
<dbReference type="CDD" id="cd02440">
    <property type="entry name" value="AdoMet_MTases"/>
    <property type="match status" value="1"/>
</dbReference>
<dbReference type="Gene3D" id="3.40.50.150">
    <property type="entry name" value="Vaccinia Virus protein VP39"/>
    <property type="match status" value="1"/>
</dbReference>
<dbReference type="HAMAP" id="MF_00472">
    <property type="entry name" value="UbiG"/>
    <property type="match status" value="1"/>
</dbReference>
<dbReference type="InterPro" id="IPR029063">
    <property type="entry name" value="SAM-dependent_MTases_sf"/>
</dbReference>
<dbReference type="InterPro" id="IPR010233">
    <property type="entry name" value="UbiG_MeTrfase"/>
</dbReference>
<dbReference type="NCBIfam" id="TIGR01983">
    <property type="entry name" value="UbiG"/>
    <property type="match status" value="1"/>
</dbReference>
<dbReference type="PANTHER" id="PTHR43464">
    <property type="entry name" value="METHYLTRANSFERASE"/>
    <property type="match status" value="1"/>
</dbReference>
<dbReference type="PANTHER" id="PTHR43464:SF19">
    <property type="entry name" value="UBIQUINONE BIOSYNTHESIS O-METHYLTRANSFERASE, MITOCHONDRIAL"/>
    <property type="match status" value="1"/>
</dbReference>
<dbReference type="Pfam" id="PF13489">
    <property type="entry name" value="Methyltransf_23"/>
    <property type="match status" value="1"/>
</dbReference>
<dbReference type="SUPFAM" id="SSF53335">
    <property type="entry name" value="S-adenosyl-L-methionine-dependent methyltransferases"/>
    <property type="match status" value="1"/>
</dbReference>
<feature type="chain" id="PRO_1000199692" description="Ubiquinone biosynthesis O-methyltransferase">
    <location>
        <begin position="1"/>
        <end position="248"/>
    </location>
</feature>
<feature type="binding site" evidence="1">
    <location>
        <position position="41"/>
    </location>
    <ligand>
        <name>S-adenosyl-L-methionine</name>
        <dbReference type="ChEBI" id="CHEBI:59789"/>
    </ligand>
</feature>
<feature type="binding site" evidence="1">
    <location>
        <position position="72"/>
    </location>
    <ligand>
        <name>S-adenosyl-L-methionine</name>
        <dbReference type="ChEBI" id="CHEBI:59789"/>
    </ligand>
</feature>
<feature type="binding site" evidence="1">
    <location>
        <position position="93"/>
    </location>
    <ligand>
        <name>S-adenosyl-L-methionine</name>
        <dbReference type="ChEBI" id="CHEBI:59789"/>
    </ligand>
</feature>
<feature type="binding site" evidence="1">
    <location>
        <position position="136"/>
    </location>
    <ligand>
        <name>S-adenosyl-L-methionine</name>
        <dbReference type="ChEBI" id="CHEBI:59789"/>
    </ligand>
</feature>
<reference key="1">
    <citation type="journal article" date="2010" name="Appl. Environ. Microbiol.">
        <title>Conserved symbiotic plasmid DNA sequences in the multireplicon pangenomic structure of Rhizobium etli.</title>
        <authorList>
            <person name="Gonzalez V."/>
            <person name="Acosta J.L."/>
            <person name="Santamaria R.I."/>
            <person name="Bustos P."/>
            <person name="Fernandez J.L."/>
            <person name="Hernandez Gonzalez I.L."/>
            <person name="Diaz R."/>
            <person name="Flores M."/>
            <person name="Palacios R."/>
            <person name="Mora J."/>
            <person name="Davila G."/>
        </authorList>
    </citation>
    <scope>NUCLEOTIDE SEQUENCE [LARGE SCALE GENOMIC DNA]</scope>
    <source>
        <strain>CIAT 652</strain>
    </source>
</reference>
<organism>
    <name type="scientific">Rhizobium etli (strain CIAT 652)</name>
    <dbReference type="NCBI Taxonomy" id="491916"/>
    <lineage>
        <taxon>Bacteria</taxon>
        <taxon>Pseudomonadati</taxon>
        <taxon>Pseudomonadota</taxon>
        <taxon>Alphaproteobacteria</taxon>
        <taxon>Hyphomicrobiales</taxon>
        <taxon>Rhizobiaceae</taxon>
        <taxon>Rhizobium/Agrobacterium group</taxon>
        <taxon>Rhizobium</taxon>
    </lineage>
</organism>
<keyword id="KW-0489">Methyltransferase</keyword>
<keyword id="KW-0949">S-adenosyl-L-methionine</keyword>
<keyword id="KW-0808">Transferase</keyword>
<keyword id="KW-0831">Ubiquinone biosynthesis</keyword>
<name>UBIG_RHIE6</name>
<proteinExistence type="inferred from homology"/>
<sequence>MTEGARSTIDQGEVDRFSAMAAEWWSPTGKFKPLHKFNPVRLAYIRDKACANFGRDQKSPRPLEGLRVLDIGCGGGLLSEPVARMGASVVGADPSDKNIGIASTHAKASGVPVDYRAVTAEELAEAGETFDIVLNMEVVEHVADVEFFMTTCAKMVRPGGLIFVATINRTMKAAALAIFAAENILRWLPRGTHQYEKLVRPEELEKPLAASGLEITDRTGVFFNPLSNQWNLSRDMDVNYMLLGKRPA</sequence>
<protein>
    <recommendedName>
        <fullName evidence="1">Ubiquinone biosynthesis O-methyltransferase</fullName>
    </recommendedName>
    <alternativeName>
        <fullName evidence="1">2-polyprenyl-6-hydroxyphenol methylase</fullName>
        <ecNumber evidence="1">2.1.1.222</ecNumber>
    </alternativeName>
    <alternativeName>
        <fullName evidence="1">3-demethylubiquinone 3-O-methyltransferase</fullName>
        <ecNumber evidence="1">2.1.1.64</ecNumber>
    </alternativeName>
</protein>
<evidence type="ECO:0000255" key="1">
    <source>
        <dbReference type="HAMAP-Rule" id="MF_00472"/>
    </source>
</evidence>
<accession>B3PP83</accession>